<gene>
    <name evidence="2" type="primary">DTX55</name>
    <name evidence="6" type="synonym">NIC3</name>
    <name evidence="5" type="ordered locus">At5g49130</name>
    <name evidence="7" type="ORF">K20J1.11</name>
</gene>
<name>DTX55_ARATH</name>
<protein>
    <recommendedName>
        <fullName evidence="2">Protein DETOXIFICATION 55</fullName>
        <shortName evidence="2">AtDTX55</shortName>
    </recommendedName>
    <alternativeName>
        <fullName evidence="4">Multidrug and toxic compound extrusion protein 55</fullName>
        <shortName evidence="4">MATE protein 55</shortName>
    </alternativeName>
    <alternativeName>
        <fullName evidence="3">Protein NOVEL ION CARRIER 3</fullName>
        <shortName evidence="3">Protein NIC3</shortName>
    </alternativeName>
</protein>
<feature type="chain" id="PRO_0000434089" description="Protein DETOXIFICATION 55">
    <location>
        <begin position="1"/>
        <end position="502"/>
    </location>
</feature>
<feature type="transmembrane region" description="Helical" evidence="1">
    <location>
        <begin position="30"/>
        <end position="50"/>
    </location>
</feature>
<feature type="transmembrane region" description="Helical" evidence="1">
    <location>
        <begin position="61"/>
        <end position="81"/>
    </location>
</feature>
<feature type="transmembrane region" description="Helical" evidence="1">
    <location>
        <begin position="112"/>
        <end position="132"/>
    </location>
</feature>
<feature type="transmembrane region" description="Helical" evidence="1">
    <location>
        <begin position="145"/>
        <end position="165"/>
    </location>
</feature>
<feature type="transmembrane region" description="Helical" evidence="1">
    <location>
        <begin position="185"/>
        <end position="205"/>
    </location>
</feature>
<feature type="transmembrane region" description="Helical" evidence="1">
    <location>
        <begin position="207"/>
        <end position="227"/>
    </location>
</feature>
<feature type="transmembrane region" description="Helical" evidence="1">
    <location>
        <begin position="261"/>
        <end position="283"/>
    </location>
</feature>
<feature type="transmembrane region" description="Helical" evidence="1">
    <location>
        <begin position="298"/>
        <end position="318"/>
    </location>
</feature>
<feature type="transmembrane region" description="Helical" evidence="1">
    <location>
        <begin position="344"/>
        <end position="364"/>
    </location>
</feature>
<feature type="transmembrane region" description="Helical" evidence="1">
    <location>
        <begin position="378"/>
        <end position="398"/>
    </location>
</feature>
<feature type="transmembrane region" description="Helical" evidence="1">
    <location>
        <begin position="419"/>
        <end position="439"/>
    </location>
</feature>
<feature type="transmembrane region" description="Helical" evidence="1">
    <location>
        <begin position="447"/>
        <end position="467"/>
    </location>
</feature>
<organism>
    <name type="scientific">Arabidopsis thaliana</name>
    <name type="common">Mouse-ear cress</name>
    <dbReference type="NCBI Taxonomy" id="3702"/>
    <lineage>
        <taxon>Eukaryota</taxon>
        <taxon>Viridiplantae</taxon>
        <taxon>Streptophyta</taxon>
        <taxon>Embryophyta</taxon>
        <taxon>Tracheophyta</taxon>
        <taxon>Spermatophyta</taxon>
        <taxon>Magnoliopsida</taxon>
        <taxon>eudicotyledons</taxon>
        <taxon>Gunneridae</taxon>
        <taxon>Pentapetalae</taxon>
        <taxon>rosids</taxon>
        <taxon>malvids</taxon>
        <taxon>Brassicales</taxon>
        <taxon>Brassicaceae</taxon>
        <taxon>Camelineae</taxon>
        <taxon>Arabidopsis</taxon>
    </lineage>
</organism>
<keyword id="KW-0472">Membrane</keyword>
<keyword id="KW-1185">Reference proteome</keyword>
<keyword id="KW-0812">Transmembrane</keyword>
<keyword id="KW-1133">Transmembrane helix</keyword>
<keyword id="KW-0813">Transport</keyword>
<proteinExistence type="evidence at transcript level"/>
<comment type="subcellular location">
    <subcellularLocation>
        <location evidence="1">Membrane</location>
        <topology evidence="1">Multi-pass membrane protein</topology>
    </subcellularLocation>
</comment>
<comment type="similarity">
    <text evidence="4">Belongs to the multi antimicrobial extrusion (MATE) (TC 2.A.66.1) family.</text>
</comment>
<accession>Q9FH21</accession>
<evidence type="ECO:0000255" key="1"/>
<evidence type="ECO:0000303" key="2">
    <source>
    </source>
</evidence>
<evidence type="ECO:0000303" key="3">
    <source ref="1"/>
</evidence>
<evidence type="ECO:0000305" key="4"/>
<evidence type="ECO:0000312" key="5">
    <source>
        <dbReference type="Araport" id="AT5G49130"/>
    </source>
</evidence>
<evidence type="ECO:0000312" key="6">
    <source>
        <dbReference type="EMBL" id="AAO85438.1"/>
    </source>
</evidence>
<evidence type="ECO:0000312" key="7">
    <source>
        <dbReference type="EMBL" id="BAB10095.1"/>
    </source>
</evidence>
<dbReference type="EMBL" id="AF488694">
    <property type="protein sequence ID" value="AAO85438.1"/>
    <property type="molecule type" value="mRNA"/>
</dbReference>
<dbReference type="EMBL" id="AB023028">
    <property type="protein sequence ID" value="BAB10095.1"/>
    <property type="molecule type" value="Genomic_DNA"/>
</dbReference>
<dbReference type="EMBL" id="CP002688">
    <property type="protein sequence ID" value="AED95774.1"/>
    <property type="molecule type" value="Genomic_DNA"/>
</dbReference>
<dbReference type="RefSeq" id="NP_199724.1">
    <property type="nucleotide sequence ID" value="NM_124290.3"/>
</dbReference>
<dbReference type="SMR" id="Q9FH21"/>
<dbReference type="FunCoup" id="Q9FH21">
    <property type="interactions" value="9"/>
</dbReference>
<dbReference type="IntAct" id="Q9FH21">
    <property type="interactions" value="40"/>
</dbReference>
<dbReference type="STRING" id="3702.Q9FH21"/>
<dbReference type="PaxDb" id="3702-AT5G49130.1"/>
<dbReference type="ProteomicsDB" id="221829"/>
<dbReference type="EnsemblPlants" id="AT5G49130.1">
    <property type="protein sequence ID" value="AT5G49130.1"/>
    <property type="gene ID" value="AT5G49130"/>
</dbReference>
<dbReference type="GeneID" id="834972"/>
<dbReference type="Gramene" id="AT5G49130.1">
    <property type="protein sequence ID" value="AT5G49130.1"/>
    <property type="gene ID" value="AT5G49130"/>
</dbReference>
<dbReference type="KEGG" id="ath:AT5G49130"/>
<dbReference type="Araport" id="AT5G49130"/>
<dbReference type="TAIR" id="AT5G49130">
    <property type="gene designation" value="BIGE1B"/>
</dbReference>
<dbReference type="eggNOG" id="KOG1347">
    <property type="taxonomic scope" value="Eukaryota"/>
</dbReference>
<dbReference type="HOGENOM" id="CLU_012893_1_0_1"/>
<dbReference type="InParanoid" id="Q9FH21"/>
<dbReference type="OMA" id="GMMLSEW"/>
<dbReference type="PhylomeDB" id="Q9FH21"/>
<dbReference type="PRO" id="PR:Q9FH21"/>
<dbReference type="Proteomes" id="UP000006548">
    <property type="component" value="Chromosome 5"/>
</dbReference>
<dbReference type="ExpressionAtlas" id="Q9FH21">
    <property type="expression patterns" value="baseline and differential"/>
</dbReference>
<dbReference type="GO" id="GO:0016020">
    <property type="term" value="C:membrane"/>
    <property type="evidence" value="ECO:0007669"/>
    <property type="project" value="UniProtKB-SubCell"/>
</dbReference>
<dbReference type="GO" id="GO:0015297">
    <property type="term" value="F:antiporter activity"/>
    <property type="evidence" value="ECO:0007669"/>
    <property type="project" value="InterPro"/>
</dbReference>
<dbReference type="GO" id="GO:0042910">
    <property type="term" value="F:xenobiotic transmembrane transporter activity"/>
    <property type="evidence" value="ECO:0007669"/>
    <property type="project" value="InterPro"/>
</dbReference>
<dbReference type="GO" id="GO:1990961">
    <property type="term" value="P:xenobiotic detoxification by transmembrane export across the plasma membrane"/>
    <property type="evidence" value="ECO:0007669"/>
    <property type="project" value="InterPro"/>
</dbReference>
<dbReference type="CDD" id="cd13132">
    <property type="entry name" value="MATE_eukaryotic"/>
    <property type="match status" value="1"/>
</dbReference>
<dbReference type="InterPro" id="IPR045069">
    <property type="entry name" value="MATE_euk"/>
</dbReference>
<dbReference type="InterPro" id="IPR002528">
    <property type="entry name" value="MATE_fam"/>
</dbReference>
<dbReference type="NCBIfam" id="TIGR00797">
    <property type="entry name" value="matE"/>
    <property type="match status" value="1"/>
</dbReference>
<dbReference type="PANTHER" id="PTHR11206">
    <property type="entry name" value="MULTIDRUG RESISTANCE PROTEIN"/>
    <property type="match status" value="1"/>
</dbReference>
<dbReference type="Pfam" id="PF01554">
    <property type="entry name" value="MatE"/>
    <property type="match status" value="2"/>
</dbReference>
<reference key="1">
    <citation type="submission" date="2002-02" db="EMBL/GenBank/DDBJ databases">
        <title>Four membrane transport proteins of the Arabidopsis MATE-family influence the Na+- and Li+ tolerance in yeast.</title>
        <authorList>
            <person name="Pellengahr K."/>
            <person name="Poree F."/>
            <person name="Dolniak B."/>
            <person name="Kursawe M."/>
            <person name="Mueller-Roeber B."/>
        </authorList>
    </citation>
    <scope>NUCLEOTIDE SEQUENCE [MRNA]</scope>
</reference>
<reference key="2">
    <citation type="journal article" date="2000" name="DNA Res.">
        <title>Structural analysis of Arabidopsis thaliana chromosome 5. X. Sequence features of the regions of 3,076,755 bp covered by sixty P1 and TAC clones.</title>
        <authorList>
            <person name="Sato S."/>
            <person name="Nakamura Y."/>
            <person name="Kaneko T."/>
            <person name="Katoh T."/>
            <person name="Asamizu E."/>
            <person name="Kotani H."/>
            <person name="Tabata S."/>
        </authorList>
    </citation>
    <scope>NUCLEOTIDE SEQUENCE [LARGE SCALE GENOMIC DNA]</scope>
    <source>
        <strain>cv. Columbia</strain>
    </source>
</reference>
<reference key="3">
    <citation type="journal article" date="2017" name="Plant J.">
        <title>Araport11: a complete reannotation of the Arabidopsis thaliana reference genome.</title>
        <authorList>
            <person name="Cheng C.Y."/>
            <person name="Krishnakumar V."/>
            <person name="Chan A.P."/>
            <person name="Thibaud-Nissen F."/>
            <person name="Schobel S."/>
            <person name="Town C.D."/>
        </authorList>
    </citation>
    <scope>GENOME REANNOTATION</scope>
    <source>
        <strain>cv. Columbia</strain>
    </source>
</reference>
<reference key="4">
    <citation type="journal article" date="2002" name="J. Biol. Chem.">
        <title>Functional cloning and characterization of a plant efflux carrier for multidrug and heavy metal detoxification.</title>
        <authorList>
            <person name="Li L."/>
            <person name="He Z."/>
            <person name="Pandey G.K."/>
            <person name="Tsuchiya T."/>
            <person name="Luan S."/>
        </authorList>
    </citation>
    <scope>GENE FAMILY</scope>
    <scope>NOMENCLATURE</scope>
</reference>
<reference key="5">
    <citation type="journal article" date="2003" name="Eur. J. Biochem.">
        <title>The multidrug/oligosaccharidyl-lipid/polysaccharide (MOP) exporter superfamily.</title>
        <authorList>
            <person name="Hvorup R.N."/>
            <person name="Winnen B."/>
            <person name="Chang A.B."/>
            <person name="Jiang Y."/>
            <person name="Zhou X.F."/>
            <person name="Saier M.H. Jr."/>
        </authorList>
    </citation>
    <scope>GENE FAMILY</scope>
</reference>
<sequence>MVVEEDSRLINLQHKYNPTMPEVVEELKRIWDISFPVAAMSILNYLKNMTSVVCMGRLGSLELAGGALAIGFTNITGYSVLSGLATGMEPLCGQAIGSKNPSLASLTLKRTIFLLLLASLPISLLWLNLAPLMLMLRQQHDITRVASLYCSFSLPDLLANSFLHPLRIYLRCKGTTWPLMWCTLVSVLLHLPITAFFTFYISLGVPGVAVSSFLTNFISLSLLLCYIYLENNNNDKTTSKSLCLDTPLMLYGSRDSGENDVWSTLVKFAVPSCIAVCLEWWWYEFMTVLAGYLPEPKVALAAAAIVIQTTSLMYTIPTALSAAVSTRVSNELGAGRPEKAKTAATVAVGAAVAVSVFGLVGTTVGREAWGKVFTADKVVLELTAAVIPVIGACELANCPQTISCGILRGSARPGIGAKINFYAFYVVGAPVAVVLAFVWGLGFMGLCYGLLGAQLACAISILTVVYNTDWNKESLKAHDLVGKNVISPNVDQIIVKCEEGLH</sequence>